<evidence type="ECO:0000250" key="1">
    <source>
        <dbReference type="UniProtKB" id="P03901"/>
    </source>
</evidence>
<evidence type="ECO:0000250" key="2">
    <source>
        <dbReference type="UniProtKB" id="P03902"/>
    </source>
</evidence>
<evidence type="ECO:0000255" key="3"/>
<evidence type="ECO:0000305" key="4"/>
<accession>Q94YD6</accession>
<name>NU4LM_SORUN</name>
<geneLocation type="mitochondrion"/>
<protein>
    <recommendedName>
        <fullName>NADH-ubiquinone oxidoreductase chain 4L</fullName>
        <ecNumber>7.1.1.2</ecNumber>
    </recommendedName>
    <alternativeName>
        <fullName>NADH dehydrogenase subunit 4L</fullName>
    </alternativeName>
</protein>
<organism>
    <name type="scientific">Sorex unguiculatus</name>
    <name type="common">Long-clawed shrew</name>
    <dbReference type="NCBI Taxonomy" id="62275"/>
    <lineage>
        <taxon>Eukaryota</taxon>
        <taxon>Metazoa</taxon>
        <taxon>Chordata</taxon>
        <taxon>Craniata</taxon>
        <taxon>Vertebrata</taxon>
        <taxon>Euteleostomi</taxon>
        <taxon>Mammalia</taxon>
        <taxon>Eutheria</taxon>
        <taxon>Laurasiatheria</taxon>
        <taxon>Eulipotyphla</taxon>
        <taxon>Soricidae</taxon>
        <taxon>Soricinae</taxon>
        <taxon>Sorex</taxon>
    </lineage>
</organism>
<reference key="1">
    <citation type="journal article" date="2001" name="J. Mol. Evol.">
        <title>Maximum likelihood analysis of the complete mitochondrial genomes of eutherians and a reevaluation of the phylogeny of bats and insectivores.</title>
        <authorList>
            <person name="Nikaido M."/>
            <person name="Kawai K."/>
            <person name="Cao Y."/>
            <person name="Harada M."/>
            <person name="Tomita S."/>
            <person name="Okada N."/>
            <person name="Hasegawa M."/>
        </authorList>
    </citation>
    <scope>NUCLEOTIDE SEQUENCE [GENOMIC DNA]</scope>
</reference>
<sequence>MSLVHMNIALAFTVALLGLLMYRSHLMSSLLCLEGMMLTLFIMGTIMILNTHFTLASMLPIILLVFAACEAAVGLSLLVMVSNTYGVDYVQNLNLLQC</sequence>
<proteinExistence type="inferred from homology"/>
<gene>
    <name type="primary">MT-ND4L</name>
    <name type="synonym">MTND4L</name>
    <name type="synonym">NADH4L</name>
    <name type="synonym">ND4L</name>
</gene>
<comment type="function">
    <text evidence="1">Core subunit of the mitochondrial membrane respiratory chain NADH dehydrogenase (Complex I) which catalyzes electron transfer from NADH through the respiratory chain, using ubiquinone as an electron acceptor. Part of the enzyme membrane arm which is embedded in the lipid bilayer and involved in proton translocation.</text>
</comment>
<comment type="catalytic activity">
    <reaction evidence="1">
        <text>a ubiquinone + NADH + 5 H(+)(in) = a ubiquinol + NAD(+) + 4 H(+)(out)</text>
        <dbReference type="Rhea" id="RHEA:29091"/>
        <dbReference type="Rhea" id="RHEA-COMP:9565"/>
        <dbReference type="Rhea" id="RHEA-COMP:9566"/>
        <dbReference type="ChEBI" id="CHEBI:15378"/>
        <dbReference type="ChEBI" id="CHEBI:16389"/>
        <dbReference type="ChEBI" id="CHEBI:17976"/>
        <dbReference type="ChEBI" id="CHEBI:57540"/>
        <dbReference type="ChEBI" id="CHEBI:57945"/>
        <dbReference type="EC" id="7.1.1.2"/>
    </reaction>
    <physiologicalReaction direction="left-to-right" evidence="1">
        <dbReference type="Rhea" id="RHEA:29092"/>
    </physiologicalReaction>
</comment>
<comment type="subunit">
    <text evidence="2">Core subunit of respiratory chain NADH dehydrogenase (Complex I) which is composed of 45 different subunits.</text>
</comment>
<comment type="subcellular location">
    <subcellularLocation>
        <location evidence="2">Mitochondrion inner membrane</location>
        <topology evidence="3">Multi-pass membrane protein</topology>
    </subcellularLocation>
</comment>
<comment type="similarity">
    <text evidence="4">Belongs to the complex I subunit 4L family.</text>
</comment>
<dbReference type="EC" id="7.1.1.2"/>
<dbReference type="EMBL" id="AB061527">
    <property type="protein sequence ID" value="BAB70639.1"/>
    <property type="molecule type" value="Genomic_DNA"/>
</dbReference>
<dbReference type="RefSeq" id="NP_976121.1">
    <property type="nucleotide sequence ID" value="NC_005435.1"/>
</dbReference>
<dbReference type="SMR" id="Q94YD6"/>
<dbReference type="GeneID" id="2746356"/>
<dbReference type="CTD" id="4539"/>
<dbReference type="GO" id="GO:0005743">
    <property type="term" value="C:mitochondrial inner membrane"/>
    <property type="evidence" value="ECO:0000250"/>
    <property type="project" value="UniProtKB"/>
</dbReference>
<dbReference type="GO" id="GO:0045271">
    <property type="term" value="C:respiratory chain complex I"/>
    <property type="evidence" value="ECO:0000250"/>
    <property type="project" value="UniProtKB"/>
</dbReference>
<dbReference type="GO" id="GO:0008137">
    <property type="term" value="F:NADH dehydrogenase (ubiquinone) activity"/>
    <property type="evidence" value="ECO:0000250"/>
    <property type="project" value="UniProtKB"/>
</dbReference>
<dbReference type="GO" id="GO:0042773">
    <property type="term" value="P:ATP synthesis coupled electron transport"/>
    <property type="evidence" value="ECO:0007669"/>
    <property type="project" value="InterPro"/>
</dbReference>
<dbReference type="FunFam" id="1.10.287.3510:FF:000002">
    <property type="entry name" value="NADH-ubiquinone oxidoreductase chain 4L"/>
    <property type="match status" value="1"/>
</dbReference>
<dbReference type="Gene3D" id="1.10.287.3510">
    <property type="match status" value="1"/>
</dbReference>
<dbReference type="InterPro" id="IPR001133">
    <property type="entry name" value="NADH_UbQ_OxRdtase_chain4L/K"/>
</dbReference>
<dbReference type="InterPro" id="IPR039428">
    <property type="entry name" value="NUOK/Mnh_C1-like"/>
</dbReference>
<dbReference type="PANTHER" id="PTHR11434:SF0">
    <property type="entry name" value="NADH-UBIQUINONE OXIDOREDUCTASE CHAIN 4L"/>
    <property type="match status" value="1"/>
</dbReference>
<dbReference type="PANTHER" id="PTHR11434">
    <property type="entry name" value="NADH-UBIQUINONE OXIDOREDUCTASE SUBUNIT ND4L"/>
    <property type="match status" value="1"/>
</dbReference>
<dbReference type="Pfam" id="PF00420">
    <property type="entry name" value="Oxidored_q2"/>
    <property type="match status" value="1"/>
</dbReference>
<keyword id="KW-0249">Electron transport</keyword>
<keyword id="KW-0472">Membrane</keyword>
<keyword id="KW-0496">Mitochondrion</keyword>
<keyword id="KW-0999">Mitochondrion inner membrane</keyword>
<keyword id="KW-0520">NAD</keyword>
<keyword id="KW-0679">Respiratory chain</keyword>
<keyword id="KW-1278">Translocase</keyword>
<keyword id="KW-0812">Transmembrane</keyword>
<keyword id="KW-1133">Transmembrane helix</keyword>
<keyword id="KW-0813">Transport</keyword>
<keyword id="KW-0830">Ubiquinone</keyword>
<feature type="chain" id="PRO_0000275125" description="NADH-ubiquinone oxidoreductase chain 4L">
    <location>
        <begin position="1"/>
        <end position="98"/>
    </location>
</feature>
<feature type="transmembrane region" description="Helical" evidence="3">
    <location>
        <begin position="1"/>
        <end position="21"/>
    </location>
</feature>
<feature type="transmembrane region" description="Helical" evidence="3">
    <location>
        <begin position="29"/>
        <end position="49"/>
    </location>
</feature>
<feature type="transmembrane region" description="Helical" evidence="3">
    <location>
        <begin position="61"/>
        <end position="81"/>
    </location>
</feature>